<reference key="1">
    <citation type="journal article" date="2001" name="Nature">
        <title>Genome sequence of enterohaemorrhagic Escherichia coli O157:H7.</title>
        <authorList>
            <person name="Perna N.T."/>
            <person name="Plunkett G. III"/>
            <person name="Burland V."/>
            <person name="Mau B."/>
            <person name="Glasner J.D."/>
            <person name="Rose D.J."/>
            <person name="Mayhew G.F."/>
            <person name="Evans P.S."/>
            <person name="Gregor J."/>
            <person name="Kirkpatrick H.A."/>
            <person name="Posfai G."/>
            <person name="Hackett J."/>
            <person name="Klink S."/>
            <person name="Boutin A."/>
            <person name="Shao Y."/>
            <person name="Miller L."/>
            <person name="Grotbeck E.J."/>
            <person name="Davis N.W."/>
            <person name="Lim A."/>
            <person name="Dimalanta E.T."/>
            <person name="Potamousis K."/>
            <person name="Apodaca J."/>
            <person name="Anantharaman T.S."/>
            <person name="Lin J."/>
            <person name="Yen G."/>
            <person name="Schwartz D.C."/>
            <person name="Welch R.A."/>
            <person name="Blattner F.R."/>
        </authorList>
    </citation>
    <scope>NUCLEOTIDE SEQUENCE [LARGE SCALE GENOMIC DNA]</scope>
    <source>
        <strain>O157:H7 / EDL933 / ATCC 700927 / EHEC</strain>
    </source>
</reference>
<reference key="2">
    <citation type="journal article" date="2001" name="DNA Res.">
        <title>Complete genome sequence of enterohemorrhagic Escherichia coli O157:H7 and genomic comparison with a laboratory strain K-12.</title>
        <authorList>
            <person name="Hayashi T."/>
            <person name="Makino K."/>
            <person name="Ohnishi M."/>
            <person name="Kurokawa K."/>
            <person name="Ishii K."/>
            <person name="Yokoyama K."/>
            <person name="Han C.-G."/>
            <person name="Ohtsubo E."/>
            <person name="Nakayama K."/>
            <person name="Murata T."/>
            <person name="Tanaka M."/>
            <person name="Tobe T."/>
            <person name="Iida T."/>
            <person name="Takami H."/>
            <person name="Honda T."/>
            <person name="Sasakawa C."/>
            <person name="Ogasawara N."/>
            <person name="Yasunaga T."/>
            <person name="Kuhara S."/>
            <person name="Shiba T."/>
            <person name="Hattori M."/>
            <person name="Shinagawa H."/>
        </authorList>
    </citation>
    <scope>NUCLEOTIDE SEQUENCE [LARGE SCALE GENOMIC DNA]</scope>
    <source>
        <strain>O157:H7 / Sakai / RIMD 0509952 / EHEC</strain>
    </source>
</reference>
<sequence>MASQLTDAFARKFYYLRLSITDVCNFRCTYCLPDGYKPSGVTNKGFLTVDEIRRVTRAFASLGTEKVRLTGGEPSLRRDFTDIIAAVRENDAIRQIAVTTNGYRLERDVANWRDAGLTGINVSVDSLDARQFHAITGQDKFNQVMAGIDAAFEAGFEKVKVNTVLMRDVNHHQLDTFLNWIQHRPIQLRFIELMETGEGSELFRKHHISGQVLRDELLRRGWIHQLRQRSDGPAQVFCHPDYAGEIGLIMPYEKDFCATCNRLRVSSIGKLHLCLFGEGGVNLRDLLEDDTQQQALEARISAALREKKQTHFLHQNNTGITQNLSYIGG</sequence>
<name>MOAA_ECO57</name>
<feature type="chain" id="PRO_0000152960" description="GTP 3',8-cyclase">
    <location>
        <begin position="1"/>
        <end position="329"/>
    </location>
</feature>
<feature type="domain" description="Radical SAM core" evidence="2">
    <location>
        <begin position="8"/>
        <end position="234"/>
    </location>
</feature>
<feature type="binding site" evidence="1">
    <location>
        <position position="17"/>
    </location>
    <ligand>
        <name>GTP</name>
        <dbReference type="ChEBI" id="CHEBI:37565"/>
    </ligand>
</feature>
<feature type="binding site" evidence="1">
    <location>
        <position position="24"/>
    </location>
    <ligand>
        <name>[4Fe-4S] cluster</name>
        <dbReference type="ChEBI" id="CHEBI:49883"/>
        <label>1</label>
        <note>4Fe-4S-S-AdoMet</note>
    </ligand>
</feature>
<feature type="binding site" evidence="1">
    <location>
        <position position="28"/>
    </location>
    <ligand>
        <name>[4Fe-4S] cluster</name>
        <dbReference type="ChEBI" id="CHEBI:49883"/>
        <label>1</label>
        <note>4Fe-4S-S-AdoMet</note>
    </ligand>
</feature>
<feature type="binding site" evidence="1">
    <location>
        <position position="30"/>
    </location>
    <ligand>
        <name>S-adenosyl-L-methionine</name>
        <dbReference type="ChEBI" id="CHEBI:59789"/>
    </ligand>
</feature>
<feature type="binding site" evidence="1">
    <location>
        <position position="31"/>
    </location>
    <ligand>
        <name>[4Fe-4S] cluster</name>
        <dbReference type="ChEBI" id="CHEBI:49883"/>
        <label>1</label>
        <note>4Fe-4S-S-AdoMet</note>
    </ligand>
</feature>
<feature type="binding site" evidence="1">
    <location>
        <position position="68"/>
    </location>
    <ligand>
        <name>GTP</name>
        <dbReference type="ChEBI" id="CHEBI:37565"/>
    </ligand>
</feature>
<feature type="binding site" evidence="1">
    <location>
        <position position="72"/>
    </location>
    <ligand>
        <name>S-adenosyl-L-methionine</name>
        <dbReference type="ChEBI" id="CHEBI:59789"/>
    </ligand>
</feature>
<feature type="binding site" evidence="1">
    <location>
        <position position="99"/>
    </location>
    <ligand>
        <name>GTP</name>
        <dbReference type="ChEBI" id="CHEBI:37565"/>
    </ligand>
</feature>
<feature type="binding site" evidence="1">
    <location>
        <position position="123"/>
    </location>
    <ligand>
        <name>S-adenosyl-L-methionine</name>
        <dbReference type="ChEBI" id="CHEBI:59789"/>
    </ligand>
</feature>
<feature type="binding site" evidence="1">
    <location>
        <position position="160"/>
    </location>
    <ligand>
        <name>GTP</name>
        <dbReference type="ChEBI" id="CHEBI:37565"/>
    </ligand>
</feature>
<feature type="binding site" evidence="1">
    <location>
        <position position="194"/>
    </location>
    <ligand>
        <name>S-adenosyl-L-methionine</name>
        <dbReference type="ChEBI" id="CHEBI:59789"/>
    </ligand>
</feature>
<feature type="binding site" evidence="1">
    <location>
        <position position="257"/>
    </location>
    <ligand>
        <name>[4Fe-4S] cluster</name>
        <dbReference type="ChEBI" id="CHEBI:49883"/>
        <label>2</label>
        <note>4Fe-4S-substrate</note>
    </ligand>
</feature>
<feature type="binding site" evidence="1">
    <location>
        <position position="260"/>
    </location>
    <ligand>
        <name>[4Fe-4S] cluster</name>
        <dbReference type="ChEBI" id="CHEBI:49883"/>
        <label>2</label>
        <note>4Fe-4S-substrate</note>
    </ligand>
</feature>
<feature type="binding site" evidence="1">
    <location>
        <begin position="262"/>
        <end position="264"/>
    </location>
    <ligand>
        <name>GTP</name>
        <dbReference type="ChEBI" id="CHEBI:37565"/>
    </ligand>
</feature>
<feature type="binding site" evidence="1">
    <location>
        <position position="274"/>
    </location>
    <ligand>
        <name>[4Fe-4S] cluster</name>
        <dbReference type="ChEBI" id="CHEBI:49883"/>
        <label>2</label>
        <note>4Fe-4S-substrate</note>
    </ligand>
</feature>
<accession>P65383</accession>
<accession>Q8X812</accession>
<comment type="function">
    <text evidence="1">Catalyzes the cyclization of GTP to (8S)-3',8-cyclo-7,8-dihydroguanosine 5'-triphosphate.</text>
</comment>
<comment type="catalytic activity">
    <reaction evidence="1">
        <text>GTP + AH2 + S-adenosyl-L-methionine = (8S)-3',8-cyclo-7,8-dihydroguanosine 5'-triphosphate + 5'-deoxyadenosine + L-methionine + A + H(+)</text>
        <dbReference type="Rhea" id="RHEA:49576"/>
        <dbReference type="ChEBI" id="CHEBI:13193"/>
        <dbReference type="ChEBI" id="CHEBI:15378"/>
        <dbReference type="ChEBI" id="CHEBI:17319"/>
        <dbReference type="ChEBI" id="CHEBI:17499"/>
        <dbReference type="ChEBI" id="CHEBI:37565"/>
        <dbReference type="ChEBI" id="CHEBI:57844"/>
        <dbReference type="ChEBI" id="CHEBI:59789"/>
        <dbReference type="ChEBI" id="CHEBI:131766"/>
        <dbReference type="EC" id="4.1.99.22"/>
    </reaction>
</comment>
<comment type="cofactor">
    <cofactor evidence="1">
        <name>[4Fe-4S] cluster</name>
        <dbReference type="ChEBI" id="CHEBI:49883"/>
    </cofactor>
    <text evidence="1">Binds 2 [4Fe-4S] clusters. Binds 1 [4Fe-4S] cluster coordinated with 3 cysteines and an exchangeable S-adenosyl-L-methionine and 1 [4Fe-4S] cluster coordinated with 3 cysteines and the GTP-derived substrate.</text>
</comment>
<comment type="pathway">
    <text evidence="1">Cofactor biosynthesis; molybdopterin biosynthesis.</text>
</comment>
<comment type="subunit">
    <text evidence="1">Monomer and homodimer.</text>
</comment>
<comment type="similarity">
    <text evidence="1">Belongs to the radical SAM superfamily. MoaA family.</text>
</comment>
<proteinExistence type="inferred from homology"/>
<organism>
    <name type="scientific">Escherichia coli O157:H7</name>
    <dbReference type="NCBI Taxonomy" id="83334"/>
    <lineage>
        <taxon>Bacteria</taxon>
        <taxon>Pseudomonadati</taxon>
        <taxon>Pseudomonadota</taxon>
        <taxon>Gammaproteobacteria</taxon>
        <taxon>Enterobacterales</taxon>
        <taxon>Enterobacteriaceae</taxon>
        <taxon>Escherichia</taxon>
    </lineage>
</organism>
<protein>
    <recommendedName>
        <fullName evidence="1">GTP 3',8-cyclase</fullName>
        <ecNumber evidence="1">4.1.99.22</ecNumber>
    </recommendedName>
    <alternativeName>
        <fullName evidence="1">Molybdenum cofactor biosynthesis protein A</fullName>
    </alternativeName>
</protein>
<gene>
    <name evidence="1" type="primary">moaA</name>
    <name type="ordered locus">Z1000</name>
    <name type="ordered locus">ECs0859</name>
</gene>
<evidence type="ECO:0000255" key="1">
    <source>
        <dbReference type="HAMAP-Rule" id="MF_01225"/>
    </source>
</evidence>
<evidence type="ECO:0000255" key="2">
    <source>
        <dbReference type="PROSITE-ProRule" id="PRU01266"/>
    </source>
</evidence>
<dbReference type="EC" id="4.1.99.22" evidence="1"/>
<dbReference type="EMBL" id="AE005174">
    <property type="protein sequence ID" value="AAG55152.1"/>
    <property type="molecule type" value="Genomic_DNA"/>
</dbReference>
<dbReference type="EMBL" id="BA000007">
    <property type="protein sequence ID" value="BAB34282.1"/>
    <property type="molecule type" value="Genomic_DNA"/>
</dbReference>
<dbReference type="PIR" id="C90736">
    <property type="entry name" value="C90736"/>
</dbReference>
<dbReference type="PIR" id="D85586">
    <property type="entry name" value="D85586"/>
</dbReference>
<dbReference type="RefSeq" id="NP_308886.1">
    <property type="nucleotide sequence ID" value="NC_002695.1"/>
</dbReference>
<dbReference type="RefSeq" id="WP_001295301.1">
    <property type="nucleotide sequence ID" value="NZ_VOAI01000006.1"/>
</dbReference>
<dbReference type="SMR" id="P65383"/>
<dbReference type="STRING" id="155864.Z1000"/>
<dbReference type="GeneID" id="86863291"/>
<dbReference type="GeneID" id="917600"/>
<dbReference type="KEGG" id="ece:Z1000"/>
<dbReference type="KEGG" id="ecs:ECs_0859"/>
<dbReference type="PATRIC" id="fig|386585.9.peg.973"/>
<dbReference type="eggNOG" id="COG2896">
    <property type="taxonomic scope" value="Bacteria"/>
</dbReference>
<dbReference type="HOGENOM" id="CLU_009273_0_1_6"/>
<dbReference type="OMA" id="QMSECFC"/>
<dbReference type="UniPathway" id="UPA00344"/>
<dbReference type="Proteomes" id="UP000000558">
    <property type="component" value="Chromosome"/>
</dbReference>
<dbReference type="Proteomes" id="UP000002519">
    <property type="component" value="Chromosome"/>
</dbReference>
<dbReference type="GO" id="GO:0051539">
    <property type="term" value="F:4 iron, 4 sulfur cluster binding"/>
    <property type="evidence" value="ECO:0007669"/>
    <property type="project" value="UniProtKB-UniRule"/>
</dbReference>
<dbReference type="GO" id="GO:0061799">
    <property type="term" value="F:cyclic pyranopterin monophosphate synthase activity"/>
    <property type="evidence" value="ECO:0007669"/>
    <property type="project" value="TreeGrafter"/>
</dbReference>
<dbReference type="GO" id="GO:0061798">
    <property type="term" value="F:GTP 3',8'-cyclase activity"/>
    <property type="evidence" value="ECO:0007669"/>
    <property type="project" value="UniProtKB-UniRule"/>
</dbReference>
<dbReference type="GO" id="GO:0005525">
    <property type="term" value="F:GTP binding"/>
    <property type="evidence" value="ECO:0007669"/>
    <property type="project" value="UniProtKB-UniRule"/>
</dbReference>
<dbReference type="GO" id="GO:0046872">
    <property type="term" value="F:metal ion binding"/>
    <property type="evidence" value="ECO:0007669"/>
    <property type="project" value="UniProtKB-KW"/>
</dbReference>
<dbReference type="GO" id="GO:1904047">
    <property type="term" value="F:S-adenosyl-L-methionine binding"/>
    <property type="evidence" value="ECO:0007669"/>
    <property type="project" value="UniProtKB-UniRule"/>
</dbReference>
<dbReference type="GO" id="GO:0006777">
    <property type="term" value="P:Mo-molybdopterin cofactor biosynthetic process"/>
    <property type="evidence" value="ECO:0007669"/>
    <property type="project" value="UniProtKB-UniRule"/>
</dbReference>
<dbReference type="CDD" id="cd01335">
    <property type="entry name" value="Radical_SAM"/>
    <property type="match status" value="1"/>
</dbReference>
<dbReference type="CDD" id="cd21117">
    <property type="entry name" value="Twitch_MoaA"/>
    <property type="match status" value="1"/>
</dbReference>
<dbReference type="FunFam" id="3.20.20.70:FF:000057">
    <property type="entry name" value="GTP 3',8-cyclase"/>
    <property type="match status" value="1"/>
</dbReference>
<dbReference type="Gene3D" id="3.20.20.70">
    <property type="entry name" value="Aldolase class I"/>
    <property type="match status" value="1"/>
</dbReference>
<dbReference type="HAMAP" id="MF_01225_B">
    <property type="entry name" value="MoaA_B"/>
    <property type="match status" value="1"/>
</dbReference>
<dbReference type="InterPro" id="IPR013785">
    <property type="entry name" value="Aldolase_TIM"/>
</dbReference>
<dbReference type="InterPro" id="IPR006638">
    <property type="entry name" value="Elp3/MiaA/NifB-like_rSAM"/>
</dbReference>
<dbReference type="InterPro" id="IPR013483">
    <property type="entry name" value="MoaA"/>
</dbReference>
<dbReference type="InterPro" id="IPR000385">
    <property type="entry name" value="MoaA_NifB_PqqE_Fe-S-bd_CS"/>
</dbReference>
<dbReference type="InterPro" id="IPR010505">
    <property type="entry name" value="MoaA_twitch"/>
</dbReference>
<dbReference type="InterPro" id="IPR050105">
    <property type="entry name" value="MoCo_biosynth_MoaA/MoaC"/>
</dbReference>
<dbReference type="InterPro" id="IPR007197">
    <property type="entry name" value="rSAM"/>
</dbReference>
<dbReference type="NCBIfam" id="TIGR02666">
    <property type="entry name" value="moaA"/>
    <property type="match status" value="1"/>
</dbReference>
<dbReference type="PANTHER" id="PTHR22960:SF28">
    <property type="entry name" value="GTP 3',8-CYCLASE"/>
    <property type="match status" value="1"/>
</dbReference>
<dbReference type="PANTHER" id="PTHR22960">
    <property type="entry name" value="MOLYBDOPTERIN COFACTOR SYNTHESIS PROTEIN A"/>
    <property type="match status" value="1"/>
</dbReference>
<dbReference type="Pfam" id="PF13353">
    <property type="entry name" value="Fer4_12"/>
    <property type="match status" value="1"/>
</dbReference>
<dbReference type="Pfam" id="PF06463">
    <property type="entry name" value="Mob_synth_C"/>
    <property type="match status" value="1"/>
</dbReference>
<dbReference type="Pfam" id="PF04055">
    <property type="entry name" value="Radical_SAM"/>
    <property type="match status" value="1"/>
</dbReference>
<dbReference type="SFLD" id="SFLDG01383">
    <property type="entry name" value="cyclic_pyranopterin_phosphate"/>
    <property type="match status" value="1"/>
</dbReference>
<dbReference type="SFLD" id="SFLDG01072">
    <property type="entry name" value="dehydrogenase_like"/>
    <property type="match status" value="1"/>
</dbReference>
<dbReference type="SMART" id="SM00729">
    <property type="entry name" value="Elp3"/>
    <property type="match status" value="1"/>
</dbReference>
<dbReference type="SUPFAM" id="SSF102114">
    <property type="entry name" value="Radical SAM enzymes"/>
    <property type="match status" value="1"/>
</dbReference>
<dbReference type="PROSITE" id="PS01305">
    <property type="entry name" value="MOAA_NIFB_PQQE"/>
    <property type="match status" value="1"/>
</dbReference>
<dbReference type="PROSITE" id="PS51918">
    <property type="entry name" value="RADICAL_SAM"/>
    <property type="match status" value="1"/>
</dbReference>
<keyword id="KW-0004">4Fe-4S</keyword>
<keyword id="KW-0342">GTP-binding</keyword>
<keyword id="KW-0408">Iron</keyword>
<keyword id="KW-0411">Iron-sulfur</keyword>
<keyword id="KW-0456">Lyase</keyword>
<keyword id="KW-0479">Metal-binding</keyword>
<keyword id="KW-0501">Molybdenum cofactor biosynthesis</keyword>
<keyword id="KW-0547">Nucleotide-binding</keyword>
<keyword id="KW-1185">Reference proteome</keyword>
<keyword id="KW-0949">S-adenosyl-L-methionine</keyword>